<gene>
    <name evidence="1" type="primary">pdxT</name>
    <name type="ordered locus">CGSHiGG_01920</name>
</gene>
<feature type="chain" id="PRO_1000069462" description="Pyridoxal 5'-phosphate synthase subunit PdxT">
    <location>
        <begin position="1"/>
        <end position="192"/>
    </location>
</feature>
<feature type="active site" description="Nucleophile" evidence="1">
    <location>
        <position position="82"/>
    </location>
</feature>
<feature type="active site" description="Charge relay system" evidence="1">
    <location>
        <position position="172"/>
    </location>
</feature>
<feature type="active site" description="Charge relay system" evidence="1">
    <location>
        <position position="174"/>
    </location>
</feature>
<feature type="binding site" evidence="1">
    <location>
        <begin position="50"/>
        <end position="52"/>
    </location>
    <ligand>
        <name>L-glutamine</name>
        <dbReference type="ChEBI" id="CHEBI:58359"/>
    </ligand>
</feature>
<feature type="binding site" evidence="1">
    <location>
        <position position="109"/>
    </location>
    <ligand>
        <name>L-glutamine</name>
        <dbReference type="ChEBI" id="CHEBI:58359"/>
    </ligand>
</feature>
<feature type="binding site" evidence="1">
    <location>
        <begin position="136"/>
        <end position="137"/>
    </location>
    <ligand>
        <name>L-glutamine</name>
        <dbReference type="ChEBI" id="CHEBI:58359"/>
    </ligand>
</feature>
<proteinExistence type="inferred from homology"/>
<name>PDXT_HAEIG</name>
<reference key="1">
    <citation type="journal article" date="2007" name="Genome Biol.">
        <title>Characterization and modeling of the Haemophilus influenzae core and supragenomes based on the complete genomic sequences of Rd and 12 clinical nontypeable strains.</title>
        <authorList>
            <person name="Hogg J.S."/>
            <person name="Hu F.Z."/>
            <person name="Janto B."/>
            <person name="Boissy R."/>
            <person name="Hayes J."/>
            <person name="Keefe R."/>
            <person name="Post J.C."/>
            <person name="Ehrlich G.D."/>
        </authorList>
    </citation>
    <scope>NUCLEOTIDE SEQUENCE [LARGE SCALE GENOMIC DNA]</scope>
    <source>
        <strain>PittGG</strain>
    </source>
</reference>
<accession>A5UF87</accession>
<evidence type="ECO:0000255" key="1">
    <source>
        <dbReference type="HAMAP-Rule" id="MF_01615"/>
    </source>
</evidence>
<comment type="function">
    <text evidence="1">Catalyzes the hydrolysis of glutamine to glutamate and ammonia as part of the biosynthesis of pyridoxal 5'-phosphate. The resulting ammonia molecule is channeled to the active site of PdxS.</text>
</comment>
<comment type="catalytic activity">
    <reaction evidence="1">
        <text>aldehydo-D-ribose 5-phosphate + D-glyceraldehyde 3-phosphate + L-glutamine = pyridoxal 5'-phosphate + L-glutamate + phosphate + 3 H2O + H(+)</text>
        <dbReference type="Rhea" id="RHEA:31507"/>
        <dbReference type="ChEBI" id="CHEBI:15377"/>
        <dbReference type="ChEBI" id="CHEBI:15378"/>
        <dbReference type="ChEBI" id="CHEBI:29985"/>
        <dbReference type="ChEBI" id="CHEBI:43474"/>
        <dbReference type="ChEBI" id="CHEBI:58273"/>
        <dbReference type="ChEBI" id="CHEBI:58359"/>
        <dbReference type="ChEBI" id="CHEBI:59776"/>
        <dbReference type="ChEBI" id="CHEBI:597326"/>
        <dbReference type="EC" id="4.3.3.6"/>
    </reaction>
</comment>
<comment type="catalytic activity">
    <reaction evidence="1">
        <text>L-glutamine + H2O = L-glutamate + NH4(+)</text>
        <dbReference type="Rhea" id="RHEA:15889"/>
        <dbReference type="ChEBI" id="CHEBI:15377"/>
        <dbReference type="ChEBI" id="CHEBI:28938"/>
        <dbReference type="ChEBI" id="CHEBI:29985"/>
        <dbReference type="ChEBI" id="CHEBI:58359"/>
        <dbReference type="EC" id="3.5.1.2"/>
    </reaction>
</comment>
<comment type="pathway">
    <text evidence="1">Cofactor biosynthesis; pyridoxal 5'-phosphate biosynthesis.</text>
</comment>
<comment type="subunit">
    <text evidence="1">In the presence of PdxS, forms a dodecamer of heterodimers. Only shows activity in the heterodimer.</text>
</comment>
<comment type="similarity">
    <text evidence="1">Belongs to the glutaminase PdxT/SNO family.</text>
</comment>
<dbReference type="EC" id="4.3.3.6" evidence="1"/>
<dbReference type="EC" id="3.5.1.2" evidence="1"/>
<dbReference type="EMBL" id="CP000672">
    <property type="protein sequence ID" value="ABQ99442.1"/>
    <property type="molecule type" value="Genomic_DNA"/>
</dbReference>
<dbReference type="SMR" id="A5UF87"/>
<dbReference type="MEROPS" id="C26.A32"/>
<dbReference type="KEGG" id="hiq:CGSHiGG_01920"/>
<dbReference type="HOGENOM" id="CLU_069674_2_0_6"/>
<dbReference type="UniPathway" id="UPA00245"/>
<dbReference type="Proteomes" id="UP000001990">
    <property type="component" value="Chromosome"/>
</dbReference>
<dbReference type="GO" id="GO:0005829">
    <property type="term" value="C:cytosol"/>
    <property type="evidence" value="ECO:0007669"/>
    <property type="project" value="TreeGrafter"/>
</dbReference>
<dbReference type="GO" id="GO:1903600">
    <property type="term" value="C:glutaminase complex"/>
    <property type="evidence" value="ECO:0007669"/>
    <property type="project" value="TreeGrafter"/>
</dbReference>
<dbReference type="GO" id="GO:0004359">
    <property type="term" value="F:glutaminase activity"/>
    <property type="evidence" value="ECO:0007669"/>
    <property type="project" value="UniProtKB-UniRule"/>
</dbReference>
<dbReference type="GO" id="GO:0036381">
    <property type="term" value="F:pyridoxal 5'-phosphate synthase (glutamine hydrolysing) activity"/>
    <property type="evidence" value="ECO:0007669"/>
    <property type="project" value="UniProtKB-UniRule"/>
</dbReference>
<dbReference type="GO" id="GO:0006543">
    <property type="term" value="P:glutamine catabolic process"/>
    <property type="evidence" value="ECO:0007669"/>
    <property type="project" value="UniProtKB-UniRule"/>
</dbReference>
<dbReference type="GO" id="GO:0042823">
    <property type="term" value="P:pyridoxal phosphate biosynthetic process"/>
    <property type="evidence" value="ECO:0007669"/>
    <property type="project" value="UniProtKB-UniRule"/>
</dbReference>
<dbReference type="GO" id="GO:0008614">
    <property type="term" value="P:pyridoxine metabolic process"/>
    <property type="evidence" value="ECO:0007669"/>
    <property type="project" value="TreeGrafter"/>
</dbReference>
<dbReference type="CDD" id="cd01749">
    <property type="entry name" value="GATase1_PB"/>
    <property type="match status" value="1"/>
</dbReference>
<dbReference type="FunFam" id="3.40.50.880:FF:000010">
    <property type="entry name" value="uncharacterized protein LOC100176842 isoform X2"/>
    <property type="match status" value="1"/>
</dbReference>
<dbReference type="Gene3D" id="3.40.50.880">
    <property type="match status" value="1"/>
</dbReference>
<dbReference type="HAMAP" id="MF_01615">
    <property type="entry name" value="PdxT"/>
    <property type="match status" value="1"/>
</dbReference>
<dbReference type="InterPro" id="IPR029062">
    <property type="entry name" value="Class_I_gatase-like"/>
</dbReference>
<dbReference type="InterPro" id="IPR002161">
    <property type="entry name" value="PdxT/SNO"/>
</dbReference>
<dbReference type="InterPro" id="IPR021196">
    <property type="entry name" value="PdxT/SNO_CS"/>
</dbReference>
<dbReference type="NCBIfam" id="TIGR03800">
    <property type="entry name" value="PLP_synth_Pdx2"/>
    <property type="match status" value="1"/>
</dbReference>
<dbReference type="PANTHER" id="PTHR31559">
    <property type="entry name" value="PYRIDOXAL 5'-PHOSPHATE SYNTHASE SUBUNIT SNO"/>
    <property type="match status" value="1"/>
</dbReference>
<dbReference type="PANTHER" id="PTHR31559:SF0">
    <property type="entry name" value="PYRIDOXAL 5'-PHOSPHATE SYNTHASE SUBUNIT SNO1-RELATED"/>
    <property type="match status" value="1"/>
</dbReference>
<dbReference type="Pfam" id="PF01174">
    <property type="entry name" value="SNO"/>
    <property type="match status" value="1"/>
</dbReference>
<dbReference type="PIRSF" id="PIRSF005639">
    <property type="entry name" value="Glut_amidoT_SNO"/>
    <property type="match status" value="1"/>
</dbReference>
<dbReference type="SUPFAM" id="SSF52317">
    <property type="entry name" value="Class I glutamine amidotransferase-like"/>
    <property type="match status" value="1"/>
</dbReference>
<dbReference type="PROSITE" id="PS01236">
    <property type="entry name" value="PDXT_SNO_1"/>
    <property type="match status" value="1"/>
</dbReference>
<dbReference type="PROSITE" id="PS51130">
    <property type="entry name" value="PDXT_SNO_2"/>
    <property type="match status" value="1"/>
</dbReference>
<protein>
    <recommendedName>
        <fullName evidence="1">Pyridoxal 5'-phosphate synthase subunit PdxT</fullName>
        <ecNumber evidence="1">4.3.3.6</ecNumber>
    </recommendedName>
    <alternativeName>
        <fullName evidence="1">Pdx2</fullName>
    </alternativeName>
    <alternativeName>
        <fullName evidence="1">Pyridoxal 5'-phosphate synthase glutaminase subunit</fullName>
        <ecNumber evidence="1">3.5.1.2</ecNumber>
    </alternativeName>
</protein>
<keyword id="KW-0315">Glutamine amidotransferase</keyword>
<keyword id="KW-0378">Hydrolase</keyword>
<keyword id="KW-0456">Lyase</keyword>
<keyword id="KW-0663">Pyridoxal phosphate</keyword>
<organism>
    <name type="scientific">Haemophilus influenzae (strain PittGG)</name>
    <dbReference type="NCBI Taxonomy" id="374931"/>
    <lineage>
        <taxon>Bacteria</taxon>
        <taxon>Pseudomonadati</taxon>
        <taxon>Pseudomonadota</taxon>
        <taxon>Gammaproteobacteria</taxon>
        <taxon>Pasteurellales</taxon>
        <taxon>Pasteurellaceae</taxon>
        <taxon>Haemophilus</taxon>
    </lineage>
</organism>
<sequence length="192" mass="21042">MKIGILALQGAFAEHAQMLEKLGIESVELRNLKNFQQHYSDLSGLILPGGESTAIGKLLRELYMLEPIKQAISSGFPVFGTCAGLILLAKEITSQKESHFGTMDIVVERNAYGRQLGSFYTEADCKGVGKIPMTFIRGPIISSVGKKVNILATVNNKIVAAQEKNMLVTSFHPELTNNLSLHKYFIDICKVA</sequence>